<reference key="1">
    <citation type="submission" date="2008-12" db="EMBL/GenBank/DDBJ databases">
        <title>Complete sequence of chromosome of Shewanella baltica OS223.</title>
        <authorList>
            <consortium name="US DOE Joint Genome Institute"/>
            <person name="Lucas S."/>
            <person name="Copeland A."/>
            <person name="Lapidus A."/>
            <person name="Glavina del Rio T."/>
            <person name="Dalin E."/>
            <person name="Tice H."/>
            <person name="Bruce D."/>
            <person name="Goodwin L."/>
            <person name="Pitluck S."/>
            <person name="Chertkov O."/>
            <person name="Meincke L."/>
            <person name="Brettin T."/>
            <person name="Detter J.C."/>
            <person name="Han C."/>
            <person name="Kuske C.R."/>
            <person name="Larimer F."/>
            <person name="Land M."/>
            <person name="Hauser L."/>
            <person name="Kyrpides N."/>
            <person name="Ovchinnikova G."/>
            <person name="Brettar I."/>
            <person name="Rodrigues J."/>
            <person name="Konstantinidis K."/>
            <person name="Tiedje J."/>
        </authorList>
    </citation>
    <scope>NUCLEOTIDE SEQUENCE [LARGE SCALE GENOMIC DNA]</scope>
    <source>
        <strain>OS223</strain>
    </source>
</reference>
<proteinExistence type="inferred from homology"/>
<feature type="chain" id="PRO_1000164519" description="Cell division protein ZapB">
    <location>
        <begin position="1"/>
        <end position="73"/>
    </location>
</feature>
<feature type="coiled-coil region" evidence="1">
    <location>
        <begin position="3"/>
        <end position="66"/>
    </location>
</feature>
<keyword id="KW-0131">Cell cycle</keyword>
<keyword id="KW-0132">Cell division</keyword>
<keyword id="KW-0175">Coiled coil</keyword>
<keyword id="KW-0963">Cytoplasm</keyword>
<keyword id="KW-0717">Septation</keyword>
<comment type="function">
    <text evidence="1">Non-essential, abundant cell division factor that is required for proper Z-ring formation. It is recruited early to the divisome by direct interaction with FtsZ, stimulating Z-ring assembly and thereby promoting cell division earlier in the cell cycle. Its recruitment to the Z-ring requires functional FtsA or ZipA.</text>
</comment>
<comment type="subunit">
    <text evidence="1">Homodimer. The ends of the coiled-coil dimer bind to each other, forming polymers. Interacts with FtsZ.</text>
</comment>
<comment type="subcellular location">
    <subcellularLocation>
        <location evidence="1">Cytoplasm</location>
    </subcellularLocation>
    <text evidence="1">Localizes to the septum at mid-cell, in a FtsZ-like pattern.</text>
</comment>
<comment type="similarity">
    <text evidence="1">Belongs to the ZapB family.</text>
</comment>
<organism>
    <name type="scientific">Shewanella baltica (strain OS223)</name>
    <dbReference type="NCBI Taxonomy" id="407976"/>
    <lineage>
        <taxon>Bacteria</taxon>
        <taxon>Pseudomonadati</taxon>
        <taxon>Pseudomonadota</taxon>
        <taxon>Gammaproteobacteria</taxon>
        <taxon>Alteromonadales</taxon>
        <taxon>Shewanellaceae</taxon>
        <taxon>Shewanella</taxon>
    </lineage>
</organism>
<accession>B8E8D2</accession>
<sequence length="73" mass="8308">MSLELLSKLETKIQAALETIELLKMELEEEKQKASTLSEHNQQLNAQNQQLQEELTSWNEKVTGLVGLLNSEI</sequence>
<evidence type="ECO:0000255" key="1">
    <source>
        <dbReference type="HAMAP-Rule" id="MF_01196"/>
    </source>
</evidence>
<name>ZAPB_SHEB2</name>
<dbReference type="EMBL" id="CP001252">
    <property type="protein sequence ID" value="ACK48429.1"/>
    <property type="molecule type" value="Genomic_DNA"/>
</dbReference>
<dbReference type="RefSeq" id="WP_006083484.1">
    <property type="nucleotide sequence ID" value="NC_011663.1"/>
</dbReference>
<dbReference type="SMR" id="B8E8D2"/>
<dbReference type="KEGG" id="sbp:Sbal223_3956"/>
<dbReference type="HOGENOM" id="CLU_171174_1_0_6"/>
<dbReference type="Proteomes" id="UP000002507">
    <property type="component" value="Chromosome"/>
</dbReference>
<dbReference type="GO" id="GO:0005737">
    <property type="term" value="C:cytoplasm"/>
    <property type="evidence" value="ECO:0007669"/>
    <property type="project" value="UniProtKB-SubCell"/>
</dbReference>
<dbReference type="GO" id="GO:0000917">
    <property type="term" value="P:division septum assembly"/>
    <property type="evidence" value="ECO:0007669"/>
    <property type="project" value="UniProtKB-KW"/>
</dbReference>
<dbReference type="GO" id="GO:0043093">
    <property type="term" value="P:FtsZ-dependent cytokinesis"/>
    <property type="evidence" value="ECO:0007669"/>
    <property type="project" value="UniProtKB-UniRule"/>
</dbReference>
<dbReference type="Gene3D" id="1.20.5.340">
    <property type="match status" value="1"/>
</dbReference>
<dbReference type="HAMAP" id="MF_01196">
    <property type="entry name" value="ZapB"/>
    <property type="match status" value="1"/>
</dbReference>
<dbReference type="InterPro" id="IPR009252">
    <property type="entry name" value="Cell_div_ZapB"/>
</dbReference>
<dbReference type="Pfam" id="PF06005">
    <property type="entry name" value="ZapB"/>
    <property type="match status" value="1"/>
</dbReference>
<gene>
    <name evidence="1" type="primary">zapB</name>
    <name type="ordered locus">Sbal223_3956</name>
</gene>
<protein>
    <recommendedName>
        <fullName evidence="1">Cell division protein ZapB</fullName>
    </recommendedName>
</protein>